<gene>
    <name evidence="1" type="primary">rnhB</name>
    <name type="ordered locus">Tery_0482</name>
</gene>
<proteinExistence type="inferred from homology"/>
<comment type="function">
    <text evidence="1">Endonuclease that specifically degrades the RNA of RNA-DNA hybrids.</text>
</comment>
<comment type="catalytic activity">
    <reaction evidence="1">
        <text>Endonucleolytic cleavage to 5'-phosphomonoester.</text>
        <dbReference type="EC" id="3.1.26.4"/>
    </reaction>
</comment>
<comment type="cofactor">
    <cofactor evidence="1">
        <name>Mn(2+)</name>
        <dbReference type="ChEBI" id="CHEBI:29035"/>
    </cofactor>
    <cofactor evidence="1">
        <name>Mg(2+)</name>
        <dbReference type="ChEBI" id="CHEBI:18420"/>
    </cofactor>
    <text evidence="1">Manganese or magnesium. Binds 1 divalent metal ion per monomer in the absence of substrate. May bind a second metal ion after substrate binding.</text>
</comment>
<comment type="subcellular location">
    <subcellularLocation>
        <location evidence="1">Cytoplasm</location>
    </subcellularLocation>
</comment>
<comment type="similarity">
    <text evidence="1">Belongs to the RNase HII family.</text>
</comment>
<name>RNH2_TRIEI</name>
<protein>
    <recommendedName>
        <fullName evidence="1">Ribonuclease HII</fullName>
        <shortName evidence="1">RNase HII</shortName>
        <ecNumber evidence="1">3.1.26.4</ecNumber>
    </recommendedName>
</protein>
<accession>Q118Y6</accession>
<reference key="1">
    <citation type="journal article" date="2015" name="Proc. Natl. Acad. Sci. U.S.A.">
        <title>Trichodesmium genome maintains abundant, widespread noncoding DNA in situ, despite oligotrophic lifestyle.</title>
        <authorList>
            <person name="Walworth N."/>
            <person name="Pfreundt U."/>
            <person name="Nelson W.C."/>
            <person name="Mincer T."/>
            <person name="Heidelberg J.F."/>
            <person name="Fu F."/>
            <person name="Waterbury J.B."/>
            <person name="Glavina del Rio T."/>
            <person name="Goodwin L."/>
            <person name="Kyrpides N.C."/>
            <person name="Land M.L."/>
            <person name="Woyke T."/>
            <person name="Hutchins D.A."/>
            <person name="Hess W.R."/>
            <person name="Webb E.A."/>
        </authorList>
    </citation>
    <scope>NUCLEOTIDE SEQUENCE [LARGE SCALE GENOMIC DNA]</scope>
    <source>
        <strain>IMS101</strain>
    </source>
</reference>
<dbReference type="EC" id="3.1.26.4" evidence="1"/>
<dbReference type="EMBL" id="CP000393">
    <property type="protein sequence ID" value="ABG49938.1"/>
    <property type="molecule type" value="Genomic_DNA"/>
</dbReference>
<dbReference type="RefSeq" id="WP_011610333.1">
    <property type="nucleotide sequence ID" value="NC_008312.1"/>
</dbReference>
<dbReference type="SMR" id="Q118Y6"/>
<dbReference type="STRING" id="203124.Tery_0482"/>
<dbReference type="KEGG" id="ter:Tery_0482"/>
<dbReference type="eggNOG" id="COG0164">
    <property type="taxonomic scope" value="Bacteria"/>
</dbReference>
<dbReference type="HOGENOM" id="CLU_036532_3_2_3"/>
<dbReference type="OrthoDB" id="9803420at2"/>
<dbReference type="GO" id="GO:0005737">
    <property type="term" value="C:cytoplasm"/>
    <property type="evidence" value="ECO:0007669"/>
    <property type="project" value="UniProtKB-SubCell"/>
</dbReference>
<dbReference type="GO" id="GO:0032299">
    <property type="term" value="C:ribonuclease H2 complex"/>
    <property type="evidence" value="ECO:0007669"/>
    <property type="project" value="TreeGrafter"/>
</dbReference>
<dbReference type="GO" id="GO:0030145">
    <property type="term" value="F:manganese ion binding"/>
    <property type="evidence" value="ECO:0007669"/>
    <property type="project" value="UniProtKB-UniRule"/>
</dbReference>
<dbReference type="GO" id="GO:0003723">
    <property type="term" value="F:RNA binding"/>
    <property type="evidence" value="ECO:0007669"/>
    <property type="project" value="InterPro"/>
</dbReference>
<dbReference type="GO" id="GO:0004523">
    <property type="term" value="F:RNA-DNA hybrid ribonuclease activity"/>
    <property type="evidence" value="ECO:0007669"/>
    <property type="project" value="UniProtKB-UniRule"/>
</dbReference>
<dbReference type="GO" id="GO:0043137">
    <property type="term" value="P:DNA replication, removal of RNA primer"/>
    <property type="evidence" value="ECO:0007669"/>
    <property type="project" value="TreeGrafter"/>
</dbReference>
<dbReference type="GO" id="GO:0006298">
    <property type="term" value="P:mismatch repair"/>
    <property type="evidence" value="ECO:0007669"/>
    <property type="project" value="TreeGrafter"/>
</dbReference>
<dbReference type="CDD" id="cd07182">
    <property type="entry name" value="RNase_HII_bacteria_HII_like"/>
    <property type="match status" value="1"/>
</dbReference>
<dbReference type="Gene3D" id="3.30.420.10">
    <property type="entry name" value="Ribonuclease H-like superfamily/Ribonuclease H"/>
    <property type="match status" value="1"/>
</dbReference>
<dbReference type="HAMAP" id="MF_00052_B">
    <property type="entry name" value="RNase_HII_B"/>
    <property type="match status" value="1"/>
</dbReference>
<dbReference type="InterPro" id="IPR022898">
    <property type="entry name" value="RNase_HII"/>
</dbReference>
<dbReference type="InterPro" id="IPR001352">
    <property type="entry name" value="RNase_HII/HIII"/>
</dbReference>
<dbReference type="InterPro" id="IPR024567">
    <property type="entry name" value="RNase_HII/HIII_dom"/>
</dbReference>
<dbReference type="InterPro" id="IPR012337">
    <property type="entry name" value="RNaseH-like_sf"/>
</dbReference>
<dbReference type="InterPro" id="IPR036397">
    <property type="entry name" value="RNaseH_sf"/>
</dbReference>
<dbReference type="NCBIfam" id="NF000595">
    <property type="entry name" value="PRK00015.1-3"/>
    <property type="match status" value="1"/>
</dbReference>
<dbReference type="NCBIfam" id="NF010537">
    <property type="entry name" value="PRK13925.1"/>
    <property type="match status" value="1"/>
</dbReference>
<dbReference type="PANTHER" id="PTHR10954">
    <property type="entry name" value="RIBONUCLEASE H2 SUBUNIT A"/>
    <property type="match status" value="1"/>
</dbReference>
<dbReference type="PANTHER" id="PTHR10954:SF18">
    <property type="entry name" value="RIBONUCLEASE HII"/>
    <property type="match status" value="1"/>
</dbReference>
<dbReference type="Pfam" id="PF01351">
    <property type="entry name" value="RNase_HII"/>
    <property type="match status" value="1"/>
</dbReference>
<dbReference type="SUPFAM" id="SSF53098">
    <property type="entry name" value="Ribonuclease H-like"/>
    <property type="match status" value="1"/>
</dbReference>
<dbReference type="PROSITE" id="PS51975">
    <property type="entry name" value="RNASE_H_2"/>
    <property type="match status" value="1"/>
</dbReference>
<sequence>MEIENSSDLIIDGLYSFLSAGVDEVGRGALFGPVVAAAVILPEDVLDDLASTGVTDSKKLTEKRRCHLASLIRTVAWDCQIGIASVREIDRLNILKASLLAMKRAVLRLKLRPDLVLVDGNQEIRDLFIPQRTVVKGDSKCLAIAAASIVAKVWRDTLIMRLAKKYPVYDLTKNKGYGTKKHKQGIINYGVSPQHRLSFSPCQPSLFEVRS</sequence>
<feature type="chain" id="PRO_0000334970" description="Ribonuclease HII">
    <location>
        <begin position="1"/>
        <end position="211"/>
    </location>
</feature>
<feature type="domain" description="RNase H type-2" evidence="2">
    <location>
        <begin position="17"/>
        <end position="211"/>
    </location>
</feature>
<feature type="binding site" evidence="1">
    <location>
        <position position="23"/>
    </location>
    <ligand>
        <name>a divalent metal cation</name>
        <dbReference type="ChEBI" id="CHEBI:60240"/>
    </ligand>
</feature>
<feature type="binding site" evidence="1">
    <location>
        <position position="24"/>
    </location>
    <ligand>
        <name>a divalent metal cation</name>
        <dbReference type="ChEBI" id="CHEBI:60240"/>
    </ligand>
</feature>
<feature type="binding site" evidence="1">
    <location>
        <position position="119"/>
    </location>
    <ligand>
        <name>a divalent metal cation</name>
        <dbReference type="ChEBI" id="CHEBI:60240"/>
    </ligand>
</feature>
<organism>
    <name type="scientific">Trichodesmium erythraeum (strain IMS101)</name>
    <dbReference type="NCBI Taxonomy" id="203124"/>
    <lineage>
        <taxon>Bacteria</taxon>
        <taxon>Bacillati</taxon>
        <taxon>Cyanobacteriota</taxon>
        <taxon>Cyanophyceae</taxon>
        <taxon>Oscillatoriophycideae</taxon>
        <taxon>Oscillatoriales</taxon>
        <taxon>Microcoleaceae</taxon>
        <taxon>Trichodesmium</taxon>
    </lineage>
</organism>
<evidence type="ECO:0000255" key="1">
    <source>
        <dbReference type="HAMAP-Rule" id="MF_00052"/>
    </source>
</evidence>
<evidence type="ECO:0000255" key="2">
    <source>
        <dbReference type="PROSITE-ProRule" id="PRU01319"/>
    </source>
</evidence>
<keyword id="KW-0963">Cytoplasm</keyword>
<keyword id="KW-0255">Endonuclease</keyword>
<keyword id="KW-0378">Hydrolase</keyword>
<keyword id="KW-0464">Manganese</keyword>
<keyword id="KW-0479">Metal-binding</keyword>
<keyword id="KW-0540">Nuclease</keyword>